<reference key="1">
    <citation type="journal article" date="2001" name="Science">
        <title>Comparative genomics of Listeria species.</title>
        <authorList>
            <person name="Glaser P."/>
            <person name="Frangeul L."/>
            <person name="Buchrieser C."/>
            <person name="Rusniok C."/>
            <person name="Amend A."/>
            <person name="Baquero F."/>
            <person name="Berche P."/>
            <person name="Bloecker H."/>
            <person name="Brandt P."/>
            <person name="Chakraborty T."/>
            <person name="Charbit A."/>
            <person name="Chetouani F."/>
            <person name="Couve E."/>
            <person name="de Daruvar A."/>
            <person name="Dehoux P."/>
            <person name="Domann E."/>
            <person name="Dominguez-Bernal G."/>
            <person name="Duchaud E."/>
            <person name="Durant L."/>
            <person name="Dussurget O."/>
            <person name="Entian K.-D."/>
            <person name="Fsihi H."/>
            <person name="Garcia-del Portillo F."/>
            <person name="Garrido P."/>
            <person name="Gautier L."/>
            <person name="Goebel W."/>
            <person name="Gomez-Lopez N."/>
            <person name="Hain T."/>
            <person name="Hauf J."/>
            <person name="Jackson D."/>
            <person name="Jones L.-M."/>
            <person name="Kaerst U."/>
            <person name="Kreft J."/>
            <person name="Kuhn M."/>
            <person name="Kunst F."/>
            <person name="Kurapkat G."/>
            <person name="Madueno E."/>
            <person name="Maitournam A."/>
            <person name="Mata Vicente J."/>
            <person name="Ng E."/>
            <person name="Nedjari H."/>
            <person name="Nordsiek G."/>
            <person name="Novella S."/>
            <person name="de Pablos B."/>
            <person name="Perez-Diaz J.-C."/>
            <person name="Purcell R."/>
            <person name="Remmel B."/>
            <person name="Rose M."/>
            <person name="Schlueter T."/>
            <person name="Simoes N."/>
            <person name="Tierrez A."/>
            <person name="Vazquez-Boland J.-A."/>
            <person name="Voss H."/>
            <person name="Wehland J."/>
            <person name="Cossart P."/>
        </authorList>
    </citation>
    <scope>NUCLEOTIDE SEQUENCE [LARGE SCALE GENOMIC DNA]</scope>
    <source>
        <strain>ATCC BAA-680 / CLIP 11262</strain>
    </source>
</reference>
<name>Y2617_LISIN</name>
<gene>
    <name type="ordered locus">lin2617</name>
</gene>
<comment type="function">
    <text evidence="1">Displays ATPase and GTPase activities.</text>
</comment>
<comment type="similarity">
    <text evidence="1">Belongs to the RapZ-like family.</text>
</comment>
<organism>
    <name type="scientific">Listeria innocua serovar 6a (strain ATCC BAA-680 / CLIP 11262)</name>
    <dbReference type="NCBI Taxonomy" id="272626"/>
    <lineage>
        <taxon>Bacteria</taxon>
        <taxon>Bacillati</taxon>
        <taxon>Bacillota</taxon>
        <taxon>Bacilli</taxon>
        <taxon>Bacillales</taxon>
        <taxon>Listeriaceae</taxon>
        <taxon>Listeria</taxon>
    </lineage>
</organism>
<accession>Q928B9</accession>
<protein>
    <recommendedName>
        <fullName evidence="1">Nucleotide-binding protein lin2617</fullName>
    </recommendedName>
</protein>
<proteinExistence type="inferred from homology"/>
<sequence length="291" mass="33570">MASKQLKLVIITGMSGAGKTVAMQSLEDLGYFCVDNLPPSLLPKFWELMKESDKMDKIALVMDLRGREFFDSIEPALDELDNTNFITTKILFLEADDKVLVSRYKETRRHHPLEPNGSVLDGINAERELLSDLKGRSQLVINTSNMAPRELRERINNEFQTEDKDVFNVQLMSFGFKYGIPIDADLVFDVRFLPNPHYIDKMRPLTGLDEDVYEYVMKWPETMAFLDKLVDLLMFTLPFYKREGKTQLVIAIGCTGGQHRSVALTEYVGKAIQQKYETTISHRDMKRRKER</sequence>
<evidence type="ECO:0000255" key="1">
    <source>
        <dbReference type="HAMAP-Rule" id="MF_00636"/>
    </source>
</evidence>
<dbReference type="EMBL" id="AL596173">
    <property type="protein sequence ID" value="CAC97844.1"/>
    <property type="molecule type" value="Genomic_DNA"/>
</dbReference>
<dbReference type="PIR" id="AD1759">
    <property type="entry name" value="AD1759"/>
</dbReference>
<dbReference type="RefSeq" id="WP_003763899.1">
    <property type="nucleotide sequence ID" value="NC_003212.1"/>
</dbReference>
<dbReference type="SMR" id="Q928B9"/>
<dbReference type="STRING" id="272626.gene:17566998"/>
<dbReference type="GeneID" id="93235881"/>
<dbReference type="KEGG" id="lin:lin2617"/>
<dbReference type="eggNOG" id="COG1660">
    <property type="taxonomic scope" value="Bacteria"/>
</dbReference>
<dbReference type="HOGENOM" id="CLU_059558_0_0_9"/>
<dbReference type="OrthoDB" id="9784461at2"/>
<dbReference type="Proteomes" id="UP000002513">
    <property type="component" value="Chromosome"/>
</dbReference>
<dbReference type="GO" id="GO:0005524">
    <property type="term" value="F:ATP binding"/>
    <property type="evidence" value="ECO:0007669"/>
    <property type="project" value="UniProtKB-UniRule"/>
</dbReference>
<dbReference type="GO" id="GO:0005525">
    <property type="term" value="F:GTP binding"/>
    <property type="evidence" value="ECO:0007669"/>
    <property type="project" value="UniProtKB-UniRule"/>
</dbReference>
<dbReference type="Gene3D" id="3.40.50.300">
    <property type="entry name" value="P-loop containing nucleotide triphosphate hydrolases"/>
    <property type="match status" value="1"/>
</dbReference>
<dbReference type="HAMAP" id="MF_00636">
    <property type="entry name" value="RapZ_like"/>
    <property type="match status" value="1"/>
</dbReference>
<dbReference type="InterPro" id="IPR027417">
    <property type="entry name" value="P-loop_NTPase"/>
</dbReference>
<dbReference type="InterPro" id="IPR005337">
    <property type="entry name" value="RapZ-like"/>
</dbReference>
<dbReference type="InterPro" id="IPR053930">
    <property type="entry name" value="RapZ-like_N"/>
</dbReference>
<dbReference type="InterPro" id="IPR053931">
    <property type="entry name" value="RapZ_C"/>
</dbReference>
<dbReference type="NCBIfam" id="NF003828">
    <property type="entry name" value="PRK05416.1"/>
    <property type="match status" value="1"/>
</dbReference>
<dbReference type="PANTHER" id="PTHR30448">
    <property type="entry name" value="RNASE ADAPTER PROTEIN RAPZ"/>
    <property type="match status" value="1"/>
</dbReference>
<dbReference type="PANTHER" id="PTHR30448:SF0">
    <property type="entry name" value="RNASE ADAPTER PROTEIN RAPZ"/>
    <property type="match status" value="1"/>
</dbReference>
<dbReference type="Pfam" id="PF22740">
    <property type="entry name" value="PapZ_C"/>
    <property type="match status" value="1"/>
</dbReference>
<dbReference type="Pfam" id="PF03668">
    <property type="entry name" value="RapZ-like_N"/>
    <property type="match status" value="1"/>
</dbReference>
<dbReference type="PIRSF" id="PIRSF005052">
    <property type="entry name" value="P-loopkin"/>
    <property type="match status" value="1"/>
</dbReference>
<dbReference type="SUPFAM" id="SSF52540">
    <property type="entry name" value="P-loop containing nucleoside triphosphate hydrolases"/>
    <property type="match status" value="1"/>
</dbReference>
<feature type="chain" id="PRO_0000107724" description="Nucleotide-binding protein lin2617">
    <location>
        <begin position="1"/>
        <end position="291"/>
    </location>
</feature>
<feature type="binding site" evidence="1">
    <location>
        <begin position="13"/>
        <end position="20"/>
    </location>
    <ligand>
        <name>ATP</name>
        <dbReference type="ChEBI" id="CHEBI:30616"/>
    </ligand>
</feature>
<feature type="binding site" evidence="1">
    <location>
        <begin position="63"/>
        <end position="66"/>
    </location>
    <ligand>
        <name>GTP</name>
        <dbReference type="ChEBI" id="CHEBI:37565"/>
    </ligand>
</feature>
<keyword id="KW-0067">ATP-binding</keyword>
<keyword id="KW-0342">GTP-binding</keyword>
<keyword id="KW-0547">Nucleotide-binding</keyword>